<organism>
    <name type="scientific">Shigella boydii serotype 4 (strain Sb227)</name>
    <dbReference type="NCBI Taxonomy" id="300268"/>
    <lineage>
        <taxon>Bacteria</taxon>
        <taxon>Pseudomonadati</taxon>
        <taxon>Pseudomonadota</taxon>
        <taxon>Gammaproteobacteria</taxon>
        <taxon>Enterobacterales</taxon>
        <taxon>Enterobacteriaceae</taxon>
        <taxon>Shigella</taxon>
    </lineage>
</organism>
<evidence type="ECO:0000255" key="1">
    <source>
        <dbReference type="HAMAP-Rule" id="MF_01062"/>
    </source>
</evidence>
<dbReference type="EC" id="2.7.11.33" evidence="1"/>
<dbReference type="EC" id="2.7.4.28" evidence="1"/>
<dbReference type="EMBL" id="CP000036">
    <property type="protein sequence ID" value="ABB66048.1"/>
    <property type="molecule type" value="Genomic_DNA"/>
</dbReference>
<dbReference type="RefSeq" id="WP_000368051.1">
    <property type="nucleotide sequence ID" value="NC_007613.1"/>
</dbReference>
<dbReference type="SMR" id="Q321G0"/>
<dbReference type="KEGG" id="sbo:SBO_1425"/>
<dbReference type="HOGENOM" id="CLU_046206_1_0_6"/>
<dbReference type="Proteomes" id="UP000007067">
    <property type="component" value="Chromosome"/>
</dbReference>
<dbReference type="GO" id="GO:0043531">
    <property type="term" value="F:ADP binding"/>
    <property type="evidence" value="ECO:0007669"/>
    <property type="project" value="UniProtKB-UniRule"/>
</dbReference>
<dbReference type="GO" id="GO:0005524">
    <property type="term" value="F:ATP binding"/>
    <property type="evidence" value="ECO:0007669"/>
    <property type="project" value="InterPro"/>
</dbReference>
<dbReference type="GO" id="GO:0016776">
    <property type="term" value="F:phosphotransferase activity, phosphate group as acceptor"/>
    <property type="evidence" value="ECO:0007669"/>
    <property type="project" value="UniProtKB-UniRule"/>
</dbReference>
<dbReference type="GO" id="GO:0004674">
    <property type="term" value="F:protein serine/threonine kinase activity"/>
    <property type="evidence" value="ECO:0007669"/>
    <property type="project" value="UniProtKB-UniRule"/>
</dbReference>
<dbReference type="HAMAP" id="MF_01062">
    <property type="entry name" value="PSRP"/>
    <property type="match status" value="1"/>
</dbReference>
<dbReference type="InterPro" id="IPR005177">
    <property type="entry name" value="Kinase-pyrophosphorylase"/>
</dbReference>
<dbReference type="InterPro" id="IPR026530">
    <property type="entry name" value="PSRP"/>
</dbReference>
<dbReference type="NCBIfam" id="NF003742">
    <property type="entry name" value="PRK05339.1"/>
    <property type="match status" value="1"/>
</dbReference>
<dbReference type="PANTHER" id="PTHR31756">
    <property type="entry name" value="PYRUVATE, PHOSPHATE DIKINASE REGULATORY PROTEIN 1, CHLOROPLASTIC"/>
    <property type="match status" value="1"/>
</dbReference>
<dbReference type="PANTHER" id="PTHR31756:SF3">
    <property type="entry name" value="PYRUVATE, PHOSPHATE DIKINASE REGULATORY PROTEIN 1, CHLOROPLASTIC"/>
    <property type="match status" value="1"/>
</dbReference>
<dbReference type="Pfam" id="PF03618">
    <property type="entry name" value="Kinase-PPPase"/>
    <property type="match status" value="1"/>
</dbReference>
<gene>
    <name evidence="1" type="primary">ppsR</name>
    <name type="ordered locus">SBO_1425</name>
</gene>
<accession>Q321G0</accession>
<comment type="function">
    <text evidence="1">Bifunctional serine/threonine kinase and phosphorylase involved in the regulation of the phosphoenolpyruvate synthase (PEPS) by catalyzing its phosphorylation/dephosphorylation.</text>
</comment>
<comment type="catalytic activity">
    <reaction evidence="1">
        <text>[pyruvate, water dikinase] + ADP = [pyruvate, water dikinase]-phosphate + AMP + H(+)</text>
        <dbReference type="Rhea" id="RHEA:46020"/>
        <dbReference type="Rhea" id="RHEA-COMP:11425"/>
        <dbReference type="Rhea" id="RHEA-COMP:11426"/>
        <dbReference type="ChEBI" id="CHEBI:15378"/>
        <dbReference type="ChEBI" id="CHEBI:43176"/>
        <dbReference type="ChEBI" id="CHEBI:68546"/>
        <dbReference type="ChEBI" id="CHEBI:456215"/>
        <dbReference type="ChEBI" id="CHEBI:456216"/>
        <dbReference type="EC" id="2.7.11.33"/>
    </reaction>
</comment>
<comment type="catalytic activity">
    <reaction evidence="1">
        <text>[pyruvate, water dikinase]-phosphate + phosphate + H(+) = [pyruvate, water dikinase] + diphosphate</text>
        <dbReference type="Rhea" id="RHEA:48580"/>
        <dbReference type="Rhea" id="RHEA-COMP:11425"/>
        <dbReference type="Rhea" id="RHEA-COMP:11426"/>
        <dbReference type="ChEBI" id="CHEBI:15378"/>
        <dbReference type="ChEBI" id="CHEBI:33019"/>
        <dbReference type="ChEBI" id="CHEBI:43176"/>
        <dbReference type="ChEBI" id="CHEBI:43474"/>
        <dbReference type="ChEBI" id="CHEBI:68546"/>
        <dbReference type="EC" id="2.7.4.28"/>
    </reaction>
</comment>
<comment type="similarity">
    <text evidence="1">Belongs to the pyruvate, phosphate/water dikinase regulatory protein family. PSRP subfamily.</text>
</comment>
<protein>
    <recommendedName>
        <fullName evidence="1">Phosphoenolpyruvate synthase regulatory protein</fullName>
        <shortName evidence="1">PEP synthase regulatory protein</shortName>
        <shortName evidence="1">PSRP</shortName>
        <ecNumber evidence="1">2.7.11.33</ecNumber>
        <ecNumber evidence="1">2.7.4.28</ecNumber>
    </recommendedName>
    <alternativeName>
        <fullName evidence="1">Pyruvate, water dikinase regulatory protein</fullName>
    </alternativeName>
</protein>
<proteinExistence type="inferred from homology"/>
<keyword id="KW-0418">Kinase</keyword>
<keyword id="KW-0547">Nucleotide-binding</keyword>
<keyword id="KW-0723">Serine/threonine-protein kinase</keyword>
<keyword id="KW-0808">Transferase</keyword>
<reference key="1">
    <citation type="journal article" date="2005" name="Nucleic Acids Res.">
        <title>Genome dynamics and diversity of Shigella species, the etiologic agents of bacillary dysentery.</title>
        <authorList>
            <person name="Yang F."/>
            <person name="Yang J."/>
            <person name="Zhang X."/>
            <person name="Chen L."/>
            <person name="Jiang Y."/>
            <person name="Yan Y."/>
            <person name="Tang X."/>
            <person name="Wang J."/>
            <person name="Xiong Z."/>
            <person name="Dong J."/>
            <person name="Xue Y."/>
            <person name="Zhu Y."/>
            <person name="Xu X."/>
            <person name="Sun L."/>
            <person name="Chen S."/>
            <person name="Nie H."/>
            <person name="Peng J."/>
            <person name="Xu J."/>
            <person name="Wang Y."/>
            <person name="Yuan Z."/>
            <person name="Wen Y."/>
            <person name="Yao Z."/>
            <person name="Shen Y."/>
            <person name="Qiang B."/>
            <person name="Hou Y."/>
            <person name="Yu J."/>
            <person name="Jin Q."/>
        </authorList>
    </citation>
    <scope>NUCLEOTIDE SEQUENCE [LARGE SCALE GENOMIC DNA]</scope>
    <source>
        <strain>Sb227</strain>
    </source>
</reference>
<feature type="chain" id="PRO_0000196710" description="Phosphoenolpyruvate synthase regulatory protein">
    <location>
        <begin position="1"/>
        <end position="277"/>
    </location>
</feature>
<feature type="binding site" evidence="1">
    <location>
        <begin position="157"/>
        <end position="164"/>
    </location>
    <ligand>
        <name>ADP</name>
        <dbReference type="ChEBI" id="CHEBI:456216"/>
    </ligand>
</feature>
<name>PSRP_SHIBS</name>
<sequence>MDNAVDRHVFYISDGTAITAEVLGHAVMSQFPVTISSITLPFVENESRARAVKDQIDAIYHQTGVRPLVFYSIVLPEIRAIILQSEGFCQDIVQALVAPLQQEMKLDPTPIAHRTHGLNPNNLNKYDARIAAIDYTLAHDDGISLRNLDQAQVILLGVSRCGKTPTSLYLAMQFGIRTANYPFIADDMDNLVLPASLKPLQHKLFGLTIDPERLAAIREERRENSRYASLRQCRMEVAEVEALYRKNQIPWINSTNYSVEEIATKILDIMGLSRRMY</sequence>